<sequence>MIITVDGPSGAGKGTLCYALAEKLGYALLDSGAIYRVTALAALQRKTDLTNETDLAELARHLDIQFIPQNGEVNIFLAGMDVSRLIRTQEVADAASKVAVFQKVRSALLQLQQDFAKNDGLIADGRDMGTVVFPNAQVKLFLDASAEERAKRRYKQLQNKGINGNFAQILAEIKERDFRDRNREVAPLKPADDAFYYSLNSSIISCAFFTISSEPTNSGTRS</sequence>
<organism>
    <name type="scientific">Haemophilus influenzae (strain ATCC 51907 / DSM 11121 / KW20 / Rd)</name>
    <dbReference type="NCBI Taxonomy" id="71421"/>
    <lineage>
        <taxon>Bacteria</taxon>
        <taxon>Pseudomonadati</taxon>
        <taxon>Pseudomonadota</taxon>
        <taxon>Gammaproteobacteria</taxon>
        <taxon>Pasteurellales</taxon>
        <taxon>Pasteurellaceae</taxon>
        <taxon>Haemophilus</taxon>
    </lineage>
</organism>
<evidence type="ECO:0000255" key="1">
    <source>
        <dbReference type="HAMAP-Rule" id="MF_00238"/>
    </source>
</evidence>
<evidence type="ECO:0000305" key="2"/>
<accession>P43893</accession>
<gene>
    <name evidence="1" type="primary">cmk2</name>
    <name type="synonym">cmkB</name>
    <name type="ordered locus">HI_1646</name>
</gene>
<comment type="catalytic activity">
    <reaction evidence="1">
        <text>CMP + ATP = CDP + ADP</text>
        <dbReference type="Rhea" id="RHEA:11600"/>
        <dbReference type="ChEBI" id="CHEBI:30616"/>
        <dbReference type="ChEBI" id="CHEBI:58069"/>
        <dbReference type="ChEBI" id="CHEBI:60377"/>
        <dbReference type="ChEBI" id="CHEBI:456216"/>
        <dbReference type="EC" id="2.7.4.25"/>
    </reaction>
</comment>
<comment type="catalytic activity">
    <reaction evidence="1">
        <text>dCMP + ATP = dCDP + ADP</text>
        <dbReference type="Rhea" id="RHEA:25094"/>
        <dbReference type="ChEBI" id="CHEBI:30616"/>
        <dbReference type="ChEBI" id="CHEBI:57566"/>
        <dbReference type="ChEBI" id="CHEBI:58593"/>
        <dbReference type="ChEBI" id="CHEBI:456216"/>
        <dbReference type="EC" id="2.7.4.25"/>
    </reaction>
</comment>
<comment type="subcellular location">
    <subcellularLocation>
        <location evidence="1">Cytoplasm</location>
    </subcellularLocation>
</comment>
<comment type="similarity">
    <text evidence="1">Belongs to the cytidylate kinase family. Type 1 subfamily.</text>
</comment>
<comment type="sequence caution" evidence="2">
    <conflict type="erroneous initiation">
        <sequence resource="EMBL-CDS" id="AAC23293"/>
    </conflict>
</comment>
<reference key="1">
    <citation type="journal article" date="1995" name="Science">
        <title>Whole-genome random sequencing and assembly of Haemophilus influenzae Rd.</title>
        <authorList>
            <person name="Fleischmann R.D."/>
            <person name="Adams M.D."/>
            <person name="White O."/>
            <person name="Clayton R.A."/>
            <person name="Kirkness E.F."/>
            <person name="Kerlavage A.R."/>
            <person name="Bult C.J."/>
            <person name="Tomb J.-F."/>
            <person name="Dougherty B.A."/>
            <person name="Merrick J.M."/>
            <person name="McKenney K."/>
            <person name="Sutton G.G."/>
            <person name="FitzHugh W."/>
            <person name="Fields C.A."/>
            <person name="Gocayne J.D."/>
            <person name="Scott J.D."/>
            <person name="Shirley R."/>
            <person name="Liu L.-I."/>
            <person name="Glodek A."/>
            <person name="Kelley J.M."/>
            <person name="Weidman J.F."/>
            <person name="Phillips C.A."/>
            <person name="Spriggs T."/>
            <person name="Hedblom E."/>
            <person name="Cotton M.D."/>
            <person name="Utterback T.R."/>
            <person name="Hanna M.C."/>
            <person name="Nguyen D.T."/>
            <person name="Saudek D.M."/>
            <person name="Brandon R.C."/>
            <person name="Fine L.D."/>
            <person name="Fritchman J.L."/>
            <person name="Fuhrmann J.L."/>
            <person name="Geoghagen N.S.M."/>
            <person name="Gnehm C.L."/>
            <person name="McDonald L.A."/>
            <person name="Small K.V."/>
            <person name="Fraser C.M."/>
            <person name="Smith H.O."/>
            <person name="Venter J.C."/>
        </authorList>
    </citation>
    <scope>NUCLEOTIDE SEQUENCE [LARGE SCALE GENOMIC DNA]</scope>
    <source>
        <strain>ATCC 51907 / DSM 11121 / KW20 / Rd</strain>
    </source>
</reference>
<dbReference type="EC" id="2.7.4.25" evidence="1"/>
<dbReference type="EMBL" id="L42023">
    <property type="protein sequence ID" value="AAC23293.1"/>
    <property type="status" value="ALT_INIT"/>
    <property type="molecule type" value="Genomic_DNA"/>
</dbReference>
<dbReference type="PIR" id="H64134">
    <property type="entry name" value="H64134"/>
</dbReference>
<dbReference type="RefSeq" id="NP_439788.1">
    <property type="nucleotide sequence ID" value="NC_000907.1"/>
</dbReference>
<dbReference type="SMR" id="P43893"/>
<dbReference type="STRING" id="71421.HI_1646"/>
<dbReference type="EnsemblBacteria" id="AAC23293">
    <property type="protein sequence ID" value="AAC23293"/>
    <property type="gene ID" value="HI_1646"/>
</dbReference>
<dbReference type="KEGG" id="hin:HI_1646"/>
<dbReference type="PATRIC" id="fig|71421.8.peg.1722"/>
<dbReference type="eggNOG" id="COG0283">
    <property type="taxonomic scope" value="Bacteria"/>
</dbReference>
<dbReference type="HOGENOM" id="CLU_079959_2_0_6"/>
<dbReference type="OrthoDB" id="9807434at2"/>
<dbReference type="PhylomeDB" id="P43893"/>
<dbReference type="BioCyc" id="HINF71421:G1GJ1-1663-MONOMER"/>
<dbReference type="Proteomes" id="UP000000579">
    <property type="component" value="Chromosome"/>
</dbReference>
<dbReference type="GO" id="GO:0005829">
    <property type="term" value="C:cytosol"/>
    <property type="evidence" value="ECO:0000318"/>
    <property type="project" value="GO_Central"/>
</dbReference>
<dbReference type="GO" id="GO:0004127">
    <property type="term" value="F:(d)CMP kinase activity"/>
    <property type="evidence" value="ECO:0000318"/>
    <property type="project" value="GO_Central"/>
</dbReference>
<dbReference type="GO" id="GO:0005524">
    <property type="term" value="F:ATP binding"/>
    <property type="evidence" value="ECO:0007669"/>
    <property type="project" value="UniProtKB-UniRule"/>
</dbReference>
<dbReference type="GO" id="GO:0036430">
    <property type="term" value="F:CMP kinase activity"/>
    <property type="evidence" value="ECO:0007669"/>
    <property type="project" value="RHEA"/>
</dbReference>
<dbReference type="GO" id="GO:0036431">
    <property type="term" value="F:dCMP kinase activity"/>
    <property type="evidence" value="ECO:0007669"/>
    <property type="project" value="RHEA"/>
</dbReference>
<dbReference type="GO" id="GO:0015949">
    <property type="term" value="P:nucleobase-containing small molecule interconversion"/>
    <property type="evidence" value="ECO:0000318"/>
    <property type="project" value="GO_Central"/>
</dbReference>
<dbReference type="GO" id="GO:0006220">
    <property type="term" value="P:pyrimidine nucleotide metabolic process"/>
    <property type="evidence" value="ECO:0007669"/>
    <property type="project" value="UniProtKB-UniRule"/>
</dbReference>
<dbReference type="CDD" id="cd02020">
    <property type="entry name" value="CMPK"/>
    <property type="match status" value="1"/>
</dbReference>
<dbReference type="FunFam" id="3.40.50.300:FF:000262">
    <property type="entry name" value="Cytidylate kinase"/>
    <property type="match status" value="1"/>
</dbReference>
<dbReference type="Gene3D" id="3.40.50.300">
    <property type="entry name" value="P-loop containing nucleotide triphosphate hydrolases"/>
    <property type="match status" value="1"/>
</dbReference>
<dbReference type="HAMAP" id="MF_00238">
    <property type="entry name" value="Cytidyl_kinase_type1"/>
    <property type="match status" value="1"/>
</dbReference>
<dbReference type="InterPro" id="IPR003136">
    <property type="entry name" value="Cytidylate_kin"/>
</dbReference>
<dbReference type="InterPro" id="IPR011994">
    <property type="entry name" value="Cytidylate_kinase_dom"/>
</dbReference>
<dbReference type="InterPro" id="IPR027417">
    <property type="entry name" value="P-loop_NTPase"/>
</dbReference>
<dbReference type="NCBIfam" id="TIGR00017">
    <property type="entry name" value="cmk"/>
    <property type="match status" value="1"/>
</dbReference>
<dbReference type="PANTHER" id="PTHR21299:SF2">
    <property type="entry name" value="CYTIDYLATE KINASE"/>
    <property type="match status" value="1"/>
</dbReference>
<dbReference type="PANTHER" id="PTHR21299">
    <property type="entry name" value="CYTIDYLATE KINASE/PANTOATE-BETA-ALANINE LIGASE"/>
    <property type="match status" value="1"/>
</dbReference>
<dbReference type="Pfam" id="PF02224">
    <property type="entry name" value="Cytidylate_kin"/>
    <property type="match status" value="1"/>
</dbReference>
<dbReference type="SUPFAM" id="SSF52540">
    <property type="entry name" value="P-loop containing nucleoside triphosphate hydrolases"/>
    <property type="match status" value="1"/>
</dbReference>
<feature type="chain" id="PRO_0000131922" description="Cytidylate kinase 2">
    <location>
        <begin position="1"/>
        <end position="222"/>
    </location>
</feature>
<feature type="binding site" evidence="1">
    <location>
        <begin position="7"/>
        <end position="15"/>
    </location>
    <ligand>
        <name>ATP</name>
        <dbReference type="ChEBI" id="CHEBI:30616"/>
    </ligand>
</feature>
<proteinExistence type="inferred from homology"/>
<name>KCY2_HAEIN</name>
<protein>
    <recommendedName>
        <fullName evidence="1">Cytidylate kinase 2</fullName>
        <shortName evidence="1">CK 2</shortName>
        <ecNumber evidence="1">2.7.4.25</ecNumber>
    </recommendedName>
    <alternativeName>
        <fullName evidence="1">Cytidine monophosphate kinase 2</fullName>
        <shortName evidence="1">CMP kinase 2</shortName>
    </alternativeName>
</protein>
<keyword id="KW-0067">ATP-binding</keyword>
<keyword id="KW-0963">Cytoplasm</keyword>
<keyword id="KW-0418">Kinase</keyword>
<keyword id="KW-0547">Nucleotide-binding</keyword>
<keyword id="KW-1185">Reference proteome</keyword>
<keyword id="KW-0808">Transferase</keyword>